<sequence>MKAFSPVRSVRKNSLSDHSLGISRSKTPVDDPMSLLYNMNDCYSKLKELVPSIPQNKKVSKMEILQHVIDYILDLQIALDSHPTIVSLHHQRPGQNQASRTPLTTLNTDISILSLQASEFPSELMSNDSKALCG</sequence>
<proteinExistence type="evidence at transcript level"/>
<gene>
    <name type="primary">ID2</name>
    <name type="ORF">QflA-11217</name>
</gene>
<comment type="function">
    <text evidence="1">Transcriptional regulator (lacking a basic DNA binding domain) which negatively regulates the basic helix-loop-helix (bHLH) transcription factors by forming heterodimers and inhibiting their DNA binding and transcriptional activity. Implicated in regulating a variety of cellular processes, including cellular growth, senescence, differentiation, apoptosis, angiogenesis, and neoplastic transformation. Inhibits skeletal muscle and cardiac myocyte differentiation. Regulates the circadian clock by repressing the transcriptional activator activity of the CLOCK-BMAL1 heterodimer. Restricts the CLOCK and BMAL1 localization to the cytoplasm. Plays a role in both the input and output pathways of the circadian clock: in the input component, is involved in modulating the magnitude of photic entrainment and in the output component, contributes to the regulation of a variety of liver clock-controlled genes involved in lipid metabolism (By similarity).</text>
</comment>
<comment type="subunit">
    <text evidence="2 4">Interacts with GATA4 and NKX2-5 (By similarity). Interacts with NR0B2. Interacts with CLOCK and BMAL1 (By similarity). Interacts with IFI204 (By similarity). Interacts with NEDD9/HEF1. Interacts with ASB4; this interaction promotes ID2 proteasomal degradation (By similarity).</text>
</comment>
<comment type="subcellular location">
    <subcellularLocation>
        <location evidence="2">Cytoplasm</location>
    </subcellularLocation>
    <subcellularLocation>
        <location evidence="2">Nucleus</location>
    </subcellularLocation>
</comment>
<comment type="domain">
    <text evidence="1">The bHLH domain is essential for its repressor activity towards the CLOCK-BMAL1 heterodimer.</text>
</comment>
<comment type="PTM">
    <text evidence="4">Ubiquitinated in a ASB4-depedent manner, leading to proteasomal degradation.</text>
</comment>
<comment type="PTM">
    <text evidence="3">Phosphorylated in vitro by CDK1, PKA and PKC.</text>
</comment>
<organism>
    <name type="scientific">Macaca fascicularis</name>
    <name type="common">Crab-eating macaque</name>
    <name type="synonym">Cynomolgus monkey</name>
    <dbReference type="NCBI Taxonomy" id="9541"/>
    <lineage>
        <taxon>Eukaryota</taxon>
        <taxon>Metazoa</taxon>
        <taxon>Chordata</taxon>
        <taxon>Craniata</taxon>
        <taxon>Vertebrata</taxon>
        <taxon>Euteleostomi</taxon>
        <taxon>Mammalia</taxon>
        <taxon>Eutheria</taxon>
        <taxon>Euarchontoglires</taxon>
        <taxon>Primates</taxon>
        <taxon>Haplorrhini</taxon>
        <taxon>Catarrhini</taxon>
        <taxon>Cercopithecidae</taxon>
        <taxon>Cercopithecinae</taxon>
        <taxon>Macaca</taxon>
    </lineage>
</organism>
<feature type="chain" id="PRO_0000127241" description="DNA-binding protein inhibitor ID-2">
    <location>
        <begin position="1"/>
        <end position="134"/>
    </location>
</feature>
<feature type="domain" description="bHLH" evidence="5">
    <location>
        <begin position="23"/>
        <end position="75"/>
    </location>
</feature>
<feature type="short sequence motif" description="Nuclear export signal" evidence="1">
    <location>
        <begin position="106"/>
        <end position="115"/>
    </location>
</feature>
<feature type="modified residue" description="Phosphoserine" evidence="4">
    <location>
        <position position="14"/>
    </location>
</feature>
<feature type="modified residue" description="Phosphoserine" evidence="2">
    <location>
        <position position="25"/>
    </location>
</feature>
<keyword id="KW-0090">Biological rhythms</keyword>
<keyword id="KW-0963">Cytoplasm</keyword>
<keyword id="KW-0217">Developmental protein</keyword>
<keyword id="KW-0539">Nucleus</keyword>
<keyword id="KW-0597">Phosphoprotein</keyword>
<keyword id="KW-1185">Reference proteome</keyword>
<keyword id="KW-0678">Repressor</keyword>
<keyword id="KW-0804">Transcription</keyword>
<keyword id="KW-0805">Transcription regulation</keyword>
<keyword id="KW-0832">Ubl conjugation</keyword>
<accession>Q4R5J7</accession>
<dbReference type="EMBL" id="AB169546">
    <property type="protein sequence ID" value="BAE01628.1"/>
    <property type="molecule type" value="mRNA"/>
</dbReference>
<dbReference type="RefSeq" id="XP_005576670.2">
    <property type="nucleotide sequence ID" value="XM_005576613.4"/>
</dbReference>
<dbReference type="SMR" id="Q4R5J7"/>
<dbReference type="STRING" id="9541.ENSMFAP00000001586"/>
<dbReference type="GeneID" id="101866775"/>
<dbReference type="KEGG" id="mcf:101866775"/>
<dbReference type="CTD" id="3398"/>
<dbReference type="VEuPathDB" id="HostDB:ENSMFAG00000000039"/>
<dbReference type="eggNOG" id="ENOG502RZP5">
    <property type="taxonomic scope" value="Eukaryota"/>
</dbReference>
<dbReference type="OMA" id="FPTELMT"/>
<dbReference type="Proteomes" id="UP000233100">
    <property type="component" value="Chromosome 13"/>
</dbReference>
<dbReference type="GO" id="GO:0005737">
    <property type="term" value="C:cytoplasm"/>
    <property type="evidence" value="ECO:0000250"/>
    <property type="project" value="UniProtKB"/>
</dbReference>
<dbReference type="GO" id="GO:0005634">
    <property type="term" value="C:nucleus"/>
    <property type="evidence" value="ECO:0007669"/>
    <property type="project" value="UniProtKB-SubCell"/>
</dbReference>
<dbReference type="GO" id="GO:0032991">
    <property type="term" value="C:protein-containing complex"/>
    <property type="evidence" value="ECO:0000250"/>
    <property type="project" value="UniProtKB"/>
</dbReference>
<dbReference type="GO" id="GO:0046983">
    <property type="term" value="F:protein dimerization activity"/>
    <property type="evidence" value="ECO:0007669"/>
    <property type="project" value="InterPro"/>
</dbReference>
<dbReference type="GO" id="GO:0090398">
    <property type="term" value="P:cellular senescence"/>
    <property type="evidence" value="ECO:0000250"/>
    <property type="project" value="UniProtKB"/>
</dbReference>
<dbReference type="GO" id="GO:0032922">
    <property type="term" value="P:circadian regulation of gene expression"/>
    <property type="evidence" value="ECO:0000250"/>
    <property type="project" value="UniProtKB"/>
</dbReference>
<dbReference type="GO" id="GO:0048557">
    <property type="term" value="P:embryonic digestive tract morphogenesis"/>
    <property type="evidence" value="ECO:0000250"/>
    <property type="project" value="UniProtKB"/>
</dbReference>
<dbReference type="GO" id="GO:0061031">
    <property type="term" value="P:endodermal digestive tract morphogenesis"/>
    <property type="evidence" value="ECO:0000250"/>
    <property type="project" value="UniProtKB"/>
</dbReference>
<dbReference type="GO" id="GO:0043153">
    <property type="term" value="P:entrainment of circadian clock by photoperiod"/>
    <property type="evidence" value="ECO:0000250"/>
    <property type="project" value="UniProtKB"/>
</dbReference>
<dbReference type="GO" id="GO:0061030">
    <property type="term" value="P:epithelial cell differentiation involved in mammary gland alveolus development"/>
    <property type="evidence" value="ECO:0000250"/>
    <property type="project" value="UniProtKB"/>
</dbReference>
<dbReference type="GO" id="GO:0045475">
    <property type="term" value="P:locomotor rhythm"/>
    <property type="evidence" value="ECO:0000250"/>
    <property type="project" value="UniProtKB"/>
</dbReference>
<dbReference type="GO" id="GO:0060749">
    <property type="term" value="P:mammary gland alveolus development"/>
    <property type="evidence" value="ECO:0000250"/>
    <property type="project" value="UniProtKB"/>
</dbReference>
<dbReference type="GO" id="GO:0033598">
    <property type="term" value="P:mammary gland epithelial cell proliferation"/>
    <property type="evidence" value="ECO:0000250"/>
    <property type="project" value="UniProtKB"/>
</dbReference>
<dbReference type="GO" id="GO:0010629">
    <property type="term" value="P:negative regulation of gene expression"/>
    <property type="evidence" value="ECO:0000250"/>
    <property type="project" value="UniProtKB"/>
</dbReference>
<dbReference type="GO" id="GO:0000122">
    <property type="term" value="P:negative regulation of transcription by RNA polymerase II"/>
    <property type="evidence" value="ECO:0007669"/>
    <property type="project" value="InterPro"/>
</dbReference>
<dbReference type="GO" id="GO:0048663">
    <property type="term" value="P:neuron fate commitment"/>
    <property type="evidence" value="ECO:0000250"/>
    <property type="project" value="UniProtKB"/>
</dbReference>
<dbReference type="GO" id="GO:0045777">
    <property type="term" value="P:positive regulation of blood pressure"/>
    <property type="evidence" value="ECO:0000250"/>
    <property type="project" value="UniProtKB"/>
</dbReference>
<dbReference type="GO" id="GO:0045893">
    <property type="term" value="P:positive regulation of DNA-templated transcription"/>
    <property type="evidence" value="ECO:0000250"/>
    <property type="project" value="UniProtKB"/>
</dbReference>
<dbReference type="GO" id="GO:0010628">
    <property type="term" value="P:positive regulation of gene expression"/>
    <property type="evidence" value="ECO:0000250"/>
    <property type="project" value="UniProtKB"/>
</dbReference>
<dbReference type="GO" id="GO:0048661">
    <property type="term" value="P:positive regulation of smooth muscle cell proliferation"/>
    <property type="evidence" value="ECO:0000250"/>
    <property type="project" value="UniProtKB"/>
</dbReference>
<dbReference type="GO" id="GO:0042752">
    <property type="term" value="P:regulation of circadian rhythm"/>
    <property type="evidence" value="ECO:0000250"/>
    <property type="project" value="UniProtKB"/>
</dbReference>
<dbReference type="GO" id="GO:0010468">
    <property type="term" value="P:regulation of gene expression"/>
    <property type="evidence" value="ECO:0000250"/>
    <property type="project" value="UniProtKB"/>
</dbReference>
<dbReference type="GO" id="GO:0019216">
    <property type="term" value="P:regulation of lipid metabolic process"/>
    <property type="evidence" value="ECO:0000250"/>
    <property type="project" value="UniProtKB"/>
</dbReference>
<dbReference type="GO" id="GO:2000177">
    <property type="term" value="P:regulation of neural precursor cell proliferation"/>
    <property type="evidence" value="ECO:0000250"/>
    <property type="project" value="UniProtKB"/>
</dbReference>
<dbReference type="GO" id="GO:0045664">
    <property type="term" value="P:regulation of neuron differentiation"/>
    <property type="evidence" value="ECO:0000250"/>
    <property type="project" value="UniProtKB"/>
</dbReference>
<dbReference type="CDD" id="cd19692">
    <property type="entry name" value="bHLH_dnHLH_ID2"/>
    <property type="match status" value="1"/>
</dbReference>
<dbReference type="FunFam" id="4.10.280.10:FF:000055">
    <property type="entry name" value="DNA-binding protein inhibitor ID-2"/>
    <property type="match status" value="1"/>
</dbReference>
<dbReference type="Gene3D" id="4.10.280.10">
    <property type="entry name" value="Helix-loop-helix DNA-binding domain"/>
    <property type="match status" value="1"/>
</dbReference>
<dbReference type="InterPro" id="IPR011598">
    <property type="entry name" value="bHLH_dom"/>
</dbReference>
<dbReference type="InterPro" id="IPR026052">
    <property type="entry name" value="DNA-bd_prot-inh"/>
</dbReference>
<dbReference type="InterPro" id="IPR036638">
    <property type="entry name" value="HLH_DNA-bd_sf"/>
</dbReference>
<dbReference type="PANTHER" id="PTHR11723">
    <property type="entry name" value="DNA-BINDING PROTEIN INHIBITOR"/>
    <property type="match status" value="1"/>
</dbReference>
<dbReference type="PANTHER" id="PTHR11723:SF5">
    <property type="entry name" value="DNA-BINDING PROTEIN INHIBITOR ID-2"/>
    <property type="match status" value="1"/>
</dbReference>
<dbReference type="Pfam" id="PF00010">
    <property type="entry name" value="HLH"/>
    <property type="match status" value="1"/>
</dbReference>
<dbReference type="SMART" id="SM00353">
    <property type="entry name" value="HLH"/>
    <property type="match status" value="1"/>
</dbReference>
<dbReference type="SUPFAM" id="SSF47459">
    <property type="entry name" value="HLH, helix-loop-helix DNA-binding domain"/>
    <property type="match status" value="1"/>
</dbReference>
<dbReference type="PROSITE" id="PS50888">
    <property type="entry name" value="BHLH"/>
    <property type="match status" value="1"/>
</dbReference>
<reference key="1">
    <citation type="submission" date="2005-06" db="EMBL/GenBank/DDBJ databases">
        <title>DNA sequences of macaque genes expressed in brain or testis and its evolutionary implications.</title>
        <authorList>
            <consortium name="International consortium for macaque cDNA sequencing and analysis"/>
        </authorList>
    </citation>
    <scope>NUCLEOTIDE SEQUENCE [LARGE SCALE MRNA]</scope>
    <source>
        <tissue>Frontal cortex</tissue>
    </source>
</reference>
<evidence type="ECO:0000250" key="1"/>
<evidence type="ECO:0000250" key="2">
    <source>
        <dbReference type="UniProtKB" id="P41136"/>
    </source>
</evidence>
<evidence type="ECO:0000250" key="3">
    <source>
        <dbReference type="UniProtKB" id="P41137"/>
    </source>
</evidence>
<evidence type="ECO:0000250" key="4">
    <source>
        <dbReference type="UniProtKB" id="Q02363"/>
    </source>
</evidence>
<evidence type="ECO:0000255" key="5">
    <source>
        <dbReference type="PROSITE-ProRule" id="PRU00981"/>
    </source>
</evidence>
<protein>
    <recommendedName>
        <fullName>DNA-binding protein inhibitor ID-2</fullName>
    </recommendedName>
    <alternativeName>
        <fullName>Inhibitor of DNA binding 2</fullName>
    </alternativeName>
    <alternativeName>
        <fullName>Inhibitor of differentiation 2</fullName>
    </alternativeName>
</protein>
<name>ID2_MACFA</name>